<feature type="chain" id="PRO_0000252191" description="UPF0386 protein YjhX">
    <location>
        <begin position="1"/>
        <end position="85"/>
    </location>
</feature>
<proteinExistence type="inferred from homology"/>
<reference key="1">
    <citation type="journal article" date="2001" name="Nature">
        <title>Complete genome sequence of Salmonella enterica serovar Typhimurium LT2.</title>
        <authorList>
            <person name="McClelland M."/>
            <person name="Sanderson K.E."/>
            <person name="Spieth J."/>
            <person name="Clifton S.W."/>
            <person name="Latreille P."/>
            <person name="Courtney L."/>
            <person name="Porwollik S."/>
            <person name="Ali J."/>
            <person name="Dante M."/>
            <person name="Du F."/>
            <person name="Hou S."/>
            <person name="Layman D."/>
            <person name="Leonard S."/>
            <person name="Nguyen C."/>
            <person name="Scott K."/>
            <person name="Holmes A."/>
            <person name="Grewal N."/>
            <person name="Mulvaney E."/>
            <person name="Ryan E."/>
            <person name="Sun H."/>
            <person name="Florea L."/>
            <person name="Miller W."/>
            <person name="Stoneking T."/>
            <person name="Nhan M."/>
            <person name="Waterston R."/>
            <person name="Wilson R.K."/>
        </authorList>
    </citation>
    <scope>NUCLEOTIDE SEQUENCE [LARGE SCALE GENOMIC DNA]</scope>
    <source>
        <strain>LT2 / SGSC1412 / ATCC 700720</strain>
    </source>
</reference>
<sequence>MNLSRQEQRTLHVLAKGGRITHIRDASGRVTAVECYSREGLLLADCTLAVFKKLKTKKLIKSVNGQPYRINTTGLNNVRAQPDNR</sequence>
<evidence type="ECO:0000255" key="1">
    <source>
        <dbReference type="HAMAP-Rule" id="MF_00827"/>
    </source>
</evidence>
<dbReference type="EMBL" id="AE006468">
    <property type="protein sequence ID" value="AAL23319.1"/>
    <property type="molecule type" value="Genomic_DNA"/>
</dbReference>
<dbReference type="RefSeq" id="NP_463360.1">
    <property type="nucleotide sequence ID" value="NC_003197.2"/>
</dbReference>
<dbReference type="RefSeq" id="WP_001054380.1">
    <property type="nucleotide sequence ID" value="NC_003197.2"/>
</dbReference>
<dbReference type="STRING" id="99287.STM4501"/>
<dbReference type="PaxDb" id="99287-STM4501"/>
<dbReference type="GeneID" id="1256027"/>
<dbReference type="KEGG" id="stm:STM4501"/>
<dbReference type="PATRIC" id="fig|99287.12.peg.4738"/>
<dbReference type="HOGENOM" id="CLU_164736_0_0_6"/>
<dbReference type="OMA" id="HPYRITE"/>
<dbReference type="PhylomeDB" id="Q7CP77"/>
<dbReference type="BioCyc" id="SENT99287:STM4501-MONOMER"/>
<dbReference type="Proteomes" id="UP000001014">
    <property type="component" value="Chromosome"/>
</dbReference>
<dbReference type="HAMAP" id="MF_00827">
    <property type="entry name" value="UPF0386"/>
    <property type="match status" value="1"/>
</dbReference>
<dbReference type="InterPro" id="IPR018654">
    <property type="entry name" value="YjhX_toxin"/>
</dbReference>
<dbReference type="NCBIfam" id="NF010240">
    <property type="entry name" value="PRK13687.1"/>
    <property type="match status" value="1"/>
</dbReference>
<dbReference type="Pfam" id="PF09857">
    <property type="entry name" value="YjhX_toxin"/>
    <property type="match status" value="1"/>
</dbReference>
<organism>
    <name type="scientific">Salmonella typhimurium (strain LT2 / SGSC1412 / ATCC 700720)</name>
    <dbReference type="NCBI Taxonomy" id="99287"/>
    <lineage>
        <taxon>Bacteria</taxon>
        <taxon>Pseudomonadati</taxon>
        <taxon>Pseudomonadota</taxon>
        <taxon>Gammaproteobacteria</taxon>
        <taxon>Enterobacterales</taxon>
        <taxon>Enterobacteriaceae</taxon>
        <taxon>Salmonella</taxon>
    </lineage>
</organism>
<name>YJHX_SALTY</name>
<comment type="similarity">
    <text evidence="1">Belongs to the UPF0386 family.</text>
</comment>
<keyword id="KW-1185">Reference proteome</keyword>
<protein>
    <recommendedName>
        <fullName evidence="1">UPF0386 protein YjhX</fullName>
    </recommendedName>
</protein>
<gene>
    <name evidence="1" type="primary">yjhX</name>
    <name type="ordered locus">STM4501</name>
</gene>
<accession>Q7CP77</accession>